<dbReference type="EC" id="1.8.4.8" evidence="1"/>
<dbReference type="EMBL" id="CP000802">
    <property type="protein sequence ID" value="ABV07147.1"/>
    <property type="molecule type" value="Genomic_DNA"/>
</dbReference>
<dbReference type="RefSeq" id="WP_000039851.1">
    <property type="nucleotide sequence ID" value="NC_009800.1"/>
</dbReference>
<dbReference type="SMR" id="A8A3P3"/>
<dbReference type="GeneID" id="93779241"/>
<dbReference type="KEGG" id="ecx:EcHS_A2902"/>
<dbReference type="HOGENOM" id="CLU_044089_3_0_6"/>
<dbReference type="UniPathway" id="UPA00140">
    <property type="reaction ID" value="UER00206"/>
</dbReference>
<dbReference type="GO" id="GO:0005737">
    <property type="term" value="C:cytoplasm"/>
    <property type="evidence" value="ECO:0007669"/>
    <property type="project" value="UniProtKB-SubCell"/>
</dbReference>
<dbReference type="GO" id="GO:0004604">
    <property type="term" value="F:phosphoadenylyl-sulfate reductase (thioredoxin) activity"/>
    <property type="evidence" value="ECO:0007669"/>
    <property type="project" value="UniProtKB-UniRule"/>
</dbReference>
<dbReference type="GO" id="GO:0070814">
    <property type="term" value="P:hydrogen sulfide biosynthetic process"/>
    <property type="evidence" value="ECO:0007669"/>
    <property type="project" value="UniProtKB-UniRule"/>
</dbReference>
<dbReference type="GO" id="GO:0019379">
    <property type="term" value="P:sulfate assimilation, phosphoadenylyl sulfate reduction by phosphoadenylyl-sulfate reductase (thioredoxin)"/>
    <property type="evidence" value="ECO:0007669"/>
    <property type="project" value="UniProtKB-UniRule"/>
</dbReference>
<dbReference type="CDD" id="cd23945">
    <property type="entry name" value="PAPS_reductase"/>
    <property type="match status" value="1"/>
</dbReference>
<dbReference type="FunFam" id="3.40.50.620:FF:000043">
    <property type="entry name" value="Phosphoadenosine phosphosulfate reductase"/>
    <property type="match status" value="1"/>
</dbReference>
<dbReference type="Gene3D" id="3.40.50.620">
    <property type="entry name" value="HUPs"/>
    <property type="match status" value="1"/>
</dbReference>
<dbReference type="HAMAP" id="MF_00063">
    <property type="entry name" value="CysH"/>
    <property type="match status" value="1"/>
</dbReference>
<dbReference type="InterPro" id="IPR004511">
    <property type="entry name" value="PAPS/APS_Rdtase"/>
</dbReference>
<dbReference type="InterPro" id="IPR002500">
    <property type="entry name" value="PAPS_reduct_dom"/>
</dbReference>
<dbReference type="InterPro" id="IPR011800">
    <property type="entry name" value="PAPS_reductase_CysH"/>
</dbReference>
<dbReference type="InterPro" id="IPR014729">
    <property type="entry name" value="Rossmann-like_a/b/a_fold"/>
</dbReference>
<dbReference type="NCBIfam" id="TIGR00434">
    <property type="entry name" value="cysH"/>
    <property type="match status" value="1"/>
</dbReference>
<dbReference type="NCBIfam" id="TIGR02057">
    <property type="entry name" value="PAPS_reductase"/>
    <property type="match status" value="1"/>
</dbReference>
<dbReference type="NCBIfam" id="NF002537">
    <property type="entry name" value="PRK02090.1"/>
    <property type="match status" value="1"/>
</dbReference>
<dbReference type="PANTHER" id="PTHR46509">
    <property type="entry name" value="PHOSPHOADENOSINE PHOSPHOSULFATE REDUCTASE"/>
    <property type="match status" value="1"/>
</dbReference>
<dbReference type="PANTHER" id="PTHR46509:SF1">
    <property type="entry name" value="PHOSPHOADENOSINE PHOSPHOSULFATE REDUCTASE"/>
    <property type="match status" value="1"/>
</dbReference>
<dbReference type="Pfam" id="PF01507">
    <property type="entry name" value="PAPS_reduct"/>
    <property type="match status" value="1"/>
</dbReference>
<dbReference type="PIRSF" id="PIRSF000857">
    <property type="entry name" value="PAPS_reductase"/>
    <property type="match status" value="1"/>
</dbReference>
<dbReference type="SUPFAM" id="SSF52402">
    <property type="entry name" value="Adenine nucleotide alpha hydrolases-like"/>
    <property type="match status" value="1"/>
</dbReference>
<feature type="chain" id="PRO_1000057431" description="Phosphoadenosine 5'-phosphosulfate reductase">
    <location>
        <begin position="1"/>
        <end position="244"/>
    </location>
</feature>
<feature type="active site" description="Nucleophile; cysteine thiosulfonate intermediate" evidence="1">
    <location>
        <position position="239"/>
    </location>
</feature>
<proteinExistence type="inferred from homology"/>
<keyword id="KW-0963">Cytoplasm</keyword>
<keyword id="KW-0560">Oxidoreductase</keyword>
<evidence type="ECO:0000255" key="1">
    <source>
        <dbReference type="HAMAP-Rule" id="MF_00063"/>
    </source>
</evidence>
<accession>A8A3P3</accession>
<comment type="function">
    <text evidence="1">Catalyzes the formation of sulfite from phosphoadenosine 5'-phosphosulfate (PAPS) using thioredoxin as an electron donor.</text>
</comment>
<comment type="catalytic activity">
    <reaction evidence="1">
        <text>[thioredoxin]-disulfide + sulfite + adenosine 3',5'-bisphosphate + 2 H(+) = [thioredoxin]-dithiol + 3'-phosphoadenylyl sulfate</text>
        <dbReference type="Rhea" id="RHEA:11724"/>
        <dbReference type="Rhea" id="RHEA-COMP:10698"/>
        <dbReference type="Rhea" id="RHEA-COMP:10700"/>
        <dbReference type="ChEBI" id="CHEBI:15378"/>
        <dbReference type="ChEBI" id="CHEBI:17359"/>
        <dbReference type="ChEBI" id="CHEBI:29950"/>
        <dbReference type="ChEBI" id="CHEBI:50058"/>
        <dbReference type="ChEBI" id="CHEBI:58339"/>
        <dbReference type="ChEBI" id="CHEBI:58343"/>
        <dbReference type="EC" id="1.8.4.8"/>
    </reaction>
</comment>
<comment type="pathway">
    <text evidence="1">Sulfur metabolism; hydrogen sulfide biosynthesis; sulfite from sulfate: step 3/3.</text>
</comment>
<comment type="subcellular location">
    <subcellularLocation>
        <location evidence="1">Cytoplasm</location>
    </subcellularLocation>
</comment>
<comment type="similarity">
    <text evidence="1">Belongs to the PAPS reductase family. CysH subfamily.</text>
</comment>
<sequence>MSKLDLNALNELPKVDRILALAETNAELEKLDAEGRVAWALDNLPGEYVLSSSFGIQAAVSLHLVNQIRPDIPVILTDTGYLFPETYRFIDELTDKLKLNLKVYRATESAAWQEARYGKLWEQGVEGIEKYNDINKVEPMNRALKELNAQTWFAGLRREQSGSRANLPVLAIQRGVFKVLPIIDWDNRTIYQYLQKHGLKYHPLWDEGYLSVGDTHTTRKWEPGMSEEETRFFGLKRECGLHEG</sequence>
<organism>
    <name type="scientific">Escherichia coli O9:H4 (strain HS)</name>
    <dbReference type="NCBI Taxonomy" id="331112"/>
    <lineage>
        <taxon>Bacteria</taxon>
        <taxon>Pseudomonadati</taxon>
        <taxon>Pseudomonadota</taxon>
        <taxon>Gammaproteobacteria</taxon>
        <taxon>Enterobacterales</taxon>
        <taxon>Enterobacteriaceae</taxon>
        <taxon>Escherichia</taxon>
    </lineage>
</organism>
<reference key="1">
    <citation type="journal article" date="2008" name="J. Bacteriol.">
        <title>The pangenome structure of Escherichia coli: comparative genomic analysis of E. coli commensal and pathogenic isolates.</title>
        <authorList>
            <person name="Rasko D.A."/>
            <person name="Rosovitz M.J."/>
            <person name="Myers G.S.A."/>
            <person name="Mongodin E.F."/>
            <person name="Fricke W.F."/>
            <person name="Gajer P."/>
            <person name="Crabtree J."/>
            <person name="Sebaihia M."/>
            <person name="Thomson N.R."/>
            <person name="Chaudhuri R."/>
            <person name="Henderson I.R."/>
            <person name="Sperandio V."/>
            <person name="Ravel J."/>
        </authorList>
    </citation>
    <scope>NUCLEOTIDE SEQUENCE [LARGE SCALE GENOMIC DNA]</scope>
    <source>
        <strain>HS</strain>
    </source>
</reference>
<protein>
    <recommendedName>
        <fullName evidence="1">Phosphoadenosine 5'-phosphosulfate reductase</fullName>
        <shortName evidence="1">PAPS reductase</shortName>
        <ecNumber evidence="1">1.8.4.8</ecNumber>
    </recommendedName>
    <alternativeName>
        <fullName evidence="1">3'-phosphoadenylylsulfate reductase</fullName>
    </alternativeName>
    <alternativeName>
        <fullName evidence="1">PAPS reductase, thioredoxin dependent</fullName>
    </alternativeName>
    <alternativeName>
        <fullName evidence="1">PAPS sulfotransferase</fullName>
    </alternativeName>
    <alternativeName>
        <fullName evidence="1">PAdoPS reductase</fullName>
    </alternativeName>
</protein>
<name>CYSH_ECOHS</name>
<gene>
    <name evidence="1" type="primary">cysH</name>
    <name type="ordered locus">EcHS_A2902</name>
</gene>